<reference key="1">
    <citation type="journal article" date="2015" name="Genome Announc.">
        <title>Genome sequence of the AIDS-associated pathogen Penicillium marneffei (ATCC18224) and its near taxonomic relative Talaromyces stipitatus (ATCC10500).</title>
        <authorList>
            <person name="Nierman W.C."/>
            <person name="Fedorova-Abrams N.D."/>
            <person name="Andrianopoulos A."/>
        </authorList>
    </citation>
    <scope>NUCLEOTIDE SEQUENCE [LARGE SCALE GENOMIC DNA]</scope>
    <source>
        <strain>ATCC 18224 / CBS 334.59 / QM 7333</strain>
    </source>
</reference>
<name>ARGJ_TALMQ</name>
<sequence length="472" mass="49905">MVVLFKAGSLGPATNSFIIAATRRGQIRLYNILQDTTIPEPKRKYIPSSGTYPKGFRVSGTHVGVKAANTKYPDLALISSDKPCTAAAAVFTTNKFQAAPVQLSKVTLEQRKGKGIQSVVINSGCANAVTGKGGLEDARSMAAKVDECNGTSEPSTLVMSTGVIGQRLPISKILDKIPTAYSNLASTHNAWLATARAICTTDTFPKLISRTFSLPSSPGITYSLAGMTKGAGMIHPNMATLLGVLCTDAPVDASVMKPLLLHAVSRSFNSISIDGDTSTNDTIAFLANGAAGGQTIASSTSQDYAALQKVLTSFAQSLSQLVVRDGEGATKFVTVRVQNSPCYDSARRIASTIARSPLVKTALYGRDANWGRILCAVGYTDGVTEGTVVPERTSVSFKPVDGSPTLRLLVNGEPEVVDEERASAILQDEDLEIIVDLGGGDKGEKGLGGEEAVYWFCDFSHEYVTINGDYRT</sequence>
<organism>
    <name type="scientific">Talaromyces marneffei (strain ATCC 18224 / CBS 334.59 / QM 7333)</name>
    <name type="common">Penicillium marneffei</name>
    <dbReference type="NCBI Taxonomy" id="441960"/>
    <lineage>
        <taxon>Eukaryota</taxon>
        <taxon>Fungi</taxon>
        <taxon>Dikarya</taxon>
        <taxon>Ascomycota</taxon>
        <taxon>Pezizomycotina</taxon>
        <taxon>Eurotiomycetes</taxon>
        <taxon>Eurotiomycetidae</taxon>
        <taxon>Eurotiales</taxon>
        <taxon>Trichocomaceae</taxon>
        <taxon>Talaromyces</taxon>
        <taxon>Talaromyces sect. Talaromyces</taxon>
    </lineage>
</organism>
<proteinExistence type="inferred from homology"/>
<accession>B6QFZ6</accession>
<protein>
    <recommendedName>
        <fullName evidence="1">Arginine biosynthesis bifunctional protein ArgJ, mitochondrial</fullName>
    </recommendedName>
    <domain>
        <recommendedName>
            <fullName evidence="1">Glutamate N-acetyltransferase</fullName>
            <shortName evidence="1">GAT</shortName>
            <ecNumber evidence="1">2.3.1.35</ecNumber>
        </recommendedName>
        <alternativeName>
            <fullName evidence="1">Ornithine acetyltransferase</fullName>
            <shortName evidence="1">OATase</shortName>
        </alternativeName>
        <alternativeName>
            <fullName evidence="1">Ornithine transacetylase</fullName>
        </alternativeName>
    </domain>
    <domain>
        <recommendedName>
            <fullName evidence="1">Amino-acid acetyltransferase</fullName>
            <ecNumber evidence="1">2.3.1.1</ecNumber>
        </recommendedName>
        <alternativeName>
            <fullName evidence="1">N-acetylglutamate synthase</fullName>
            <shortName evidence="1">AGS</shortName>
        </alternativeName>
    </domain>
    <component>
        <recommendedName>
            <fullName evidence="1">Arginine biosynthesis bifunctional protein ArgJ alpha chain</fullName>
        </recommendedName>
    </component>
    <component>
        <recommendedName>
            <fullName evidence="1">Arginine biosynthesis bifunctional protein ArgJ beta chain</fullName>
        </recommendedName>
    </component>
</protein>
<feature type="chain" id="PRO_0000398082" description="Arginine biosynthesis bifunctional protein ArgJ alpha chain" evidence="1">
    <location>
        <begin position="1"/>
        <end position="239"/>
    </location>
</feature>
<feature type="chain" id="PRO_0000398083" description="Arginine biosynthesis bifunctional protein ArgJ beta chain" evidence="1">
    <location>
        <begin position="240"/>
        <end position="472"/>
    </location>
</feature>
<feature type="active site" description="Nucleophile" evidence="1">
    <location>
        <position position="240"/>
    </location>
</feature>
<feature type="binding site" evidence="1">
    <location>
        <position position="200"/>
    </location>
    <ligand>
        <name>substrate</name>
    </ligand>
</feature>
<feature type="binding site" evidence="1">
    <location>
        <position position="229"/>
    </location>
    <ligand>
        <name>substrate</name>
    </ligand>
</feature>
<feature type="binding site" evidence="1">
    <location>
        <position position="240"/>
    </location>
    <ligand>
        <name>substrate</name>
    </ligand>
</feature>
<feature type="binding site" evidence="1">
    <location>
        <position position="327"/>
    </location>
    <ligand>
        <name>substrate</name>
    </ligand>
</feature>
<feature type="binding site" evidence="1">
    <location>
        <position position="467"/>
    </location>
    <ligand>
        <name>substrate</name>
    </ligand>
</feature>
<feature type="binding site" evidence="1">
    <location>
        <position position="472"/>
    </location>
    <ligand>
        <name>substrate</name>
    </ligand>
</feature>
<feature type="site" description="Involved in the stabilization of negative charge on the oxyanion by the formation of the oxyanion hole" evidence="1">
    <location>
        <position position="161"/>
    </location>
</feature>
<feature type="site" description="Involved in the stabilization of negative charge on the oxyanion by the formation of the oxyanion hole" evidence="1">
    <location>
        <position position="162"/>
    </location>
</feature>
<feature type="site" description="Cleavage; by autolysis" evidence="1">
    <location>
        <begin position="239"/>
        <end position="240"/>
    </location>
</feature>
<evidence type="ECO:0000255" key="1">
    <source>
        <dbReference type="HAMAP-Rule" id="MF_03124"/>
    </source>
</evidence>
<keyword id="KW-0012">Acyltransferase</keyword>
<keyword id="KW-0028">Amino-acid biosynthesis</keyword>
<keyword id="KW-0055">Arginine biosynthesis</keyword>
<keyword id="KW-0068">Autocatalytic cleavage</keyword>
<keyword id="KW-0496">Mitochondrion</keyword>
<keyword id="KW-0511">Multifunctional enzyme</keyword>
<keyword id="KW-1185">Reference proteome</keyword>
<keyword id="KW-0808">Transferase</keyword>
<gene>
    <name type="ORF">PMAA_083870</name>
</gene>
<dbReference type="EC" id="2.3.1.35" evidence="1"/>
<dbReference type="EC" id="2.3.1.1" evidence="1"/>
<dbReference type="EMBL" id="DS995901">
    <property type="protein sequence ID" value="EEA24381.1"/>
    <property type="molecule type" value="Genomic_DNA"/>
</dbReference>
<dbReference type="RefSeq" id="XP_002147892.1">
    <property type="nucleotide sequence ID" value="XM_002147856.1"/>
</dbReference>
<dbReference type="SMR" id="B6QFZ6"/>
<dbReference type="STRING" id="441960.B6QFZ6"/>
<dbReference type="MEROPS" id="T05.001"/>
<dbReference type="VEuPathDB" id="FungiDB:PMAA_083870"/>
<dbReference type="HOGENOM" id="CLU_027172_1_0_1"/>
<dbReference type="OrthoDB" id="4831at28568"/>
<dbReference type="PhylomeDB" id="B6QFZ6"/>
<dbReference type="UniPathway" id="UPA00068">
    <property type="reaction ID" value="UER00106"/>
</dbReference>
<dbReference type="UniPathway" id="UPA00068">
    <property type="reaction ID" value="UER00111"/>
</dbReference>
<dbReference type="Proteomes" id="UP000001294">
    <property type="component" value="Unassembled WGS sequence"/>
</dbReference>
<dbReference type="GO" id="GO:0005759">
    <property type="term" value="C:mitochondrial matrix"/>
    <property type="evidence" value="ECO:0007669"/>
    <property type="project" value="UniProtKB-SubCell"/>
</dbReference>
<dbReference type="GO" id="GO:0004358">
    <property type="term" value="F:glutamate N-acetyltransferase activity"/>
    <property type="evidence" value="ECO:0007669"/>
    <property type="project" value="UniProtKB-UniRule"/>
</dbReference>
<dbReference type="GO" id="GO:0004042">
    <property type="term" value="F:L-glutamate N-acetyltransferase activity"/>
    <property type="evidence" value="ECO:0007669"/>
    <property type="project" value="UniProtKB-UniRule"/>
</dbReference>
<dbReference type="GO" id="GO:0006526">
    <property type="term" value="P:L-arginine biosynthetic process"/>
    <property type="evidence" value="ECO:0007669"/>
    <property type="project" value="UniProtKB-UniRule"/>
</dbReference>
<dbReference type="GO" id="GO:0006592">
    <property type="term" value="P:ornithine biosynthetic process"/>
    <property type="evidence" value="ECO:0007669"/>
    <property type="project" value="TreeGrafter"/>
</dbReference>
<dbReference type="CDD" id="cd02152">
    <property type="entry name" value="OAT"/>
    <property type="match status" value="1"/>
</dbReference>
<dbReference type="FunFam" id="3.60.70.12:FF:000001">
    <property type="entry name" value="Arginine biosynthesis bifunctional protein ArgJ, chloroplastic"/>
    <property type="match status" value="1"/>
</dbReference>
<dbReference type="FunFam" id="3.10.20.340:FF:000002">
    <property type="entry name" value="Arginine biosynthesis bifunctional protein ArgJ, mitochondrial"/>
    <property type="match status" value="1"/>
</dbReference>
<dbReference type="FunFam" id="3.30.2330.10:FF:000001">
    <property type="entry name" value="Arginine biosynthesis bifunctional protein ArgJ, mitochondrial"/>
    <property type="match status" value="1"/>
</dbReference>
<dbReference type="Gene3D" id="3.30.2330.10">
    <property type="entry name" value="arginine biosynthesis bifunctional protein suprefamily"/>
    <property type="match status" value="1"/>
</dbReference>
<dbReference type="Gene3D" id="3.10.20.340">
    <property type="entry name" value="ArgJ beta chain, C-terminal domain"/>
    <property type="match status" value="1"/>
</dbReference>
<dbReference type="Gene3D" id="3.60.70.12">
    <property type="entry name" value="L-amino peptidase D-ALA esterase/amidase"/>
    <property type="match status" value="1"/>
</dbReference>
<dbReference type="HAMAP" id="MF_01106">
    <property type="entry name" value="ArgJ"/>
    <property type="match status" value="1"/>
</dbReference>
<dbReference type="InterPro" id="IPR002813">
    <property type="entry name" value="Arg_biosynth_ArgJ"/>
</dbReference>
<dbReference type="InterPro" id="IPR016117">
    <property type="entry name" value="ArgJ-like_dom_sf"/>
</dbReference>
<dbReference type="InterPro" id="IPR042195">
    <property type="entry name" value="ArgJ_beta_C"/>
</dbReference>
<dbReference type="NCBIfam" id="TIGR00120">
    <property type="entry name" value="ArgJ"/>
    <property type="match status" value="1"/>
</dbReference>
<dbReference type="NCBIfam" id="NF003802">
    <property type="entry name" value="PRK05388.1"/>
    <property type="match status" value="1"/>
</dbReference>
<dbReference type="PANTHER" id="PTHR23100">
    <property type="entry name" value="ARGININE BIOSYNTHESIS BIFUNCTIONAL PROTEIN ARGJ"/>
    <property type="match status" value="1"/>
</dbReference>
<dbReference type="PANTHER" id="PTHR23100:SF0">
    <property type="entry name" value="ARGININE BIOSYNTHESIS BIFUNCTIONAL PROTEIN ARGJ, MITOCHONDRIAL"/>
    <property type="match status" value="1"/>
</dbReference>
<dbReference type="Pfam" id="PF01960">
    <property type="entry name" value="ArgJ"/>
    <property type="match status" value="1"/>
</dbReference>
<dbReference type="SUPFAM" id="SSF56266">
    <property type="entry name" value="DmpA/ArgJ-like"/>
    <property type="match status" value="1"/>
</dbReference>
<comment type="function">
    <text evidence="1">Catalyzes two activities which are involved in the cyclic version of arginine biosynthesis: the synthesis of acetylglutamate from glutamate and acetyl-CoA, and of ornithine by transacetylation between acetylornithine and glutamate.</text>
</comment>
<comment type="catalytic activity">
    <reaction evidence="1">
        <text>N(2)-acetyl-L-ornithine + L-glutamate = N-acetyl-L-glutamate + L-ornithine</text>
        <dbReference type="Rhea" id="RHEA:15349"/>
        <dbReference type="ChEBI" id="CHEBI:29985"/>
        <dbReference type="ChEBI" id="CHEBI:44337"/>
        <dbReference type="ChEBI" id="CHEBI:46911"/>
        <dbReference type="ChEBI" id="CHEBI:57805"/>
        <dbReference type="EC" id="2.3.1.35"/>
    </reaction>
</comment>
<comment type="catalytic activity">
    <reaction evidence="1">
        <text>L-glutamate + acetyl-CoA = N-acetyl-L-glutamate + CoA + H(+)</text>
        <dbReference type="Rhea" id="RHEA:24292"/>
        <dbReference type="ChEBI" id="CHEBI:15378"/>
        <dbReference type="ChEBI" id="CHEBI:29985"/>
        <dbReference type="ChEBI" id="CHEBI:44337"/>
        <dbReference type="ChEBI" id="CHEBI:57287"/>
        <dbReference type="ChEBI" id="CHEBI:57288"/>
        <dbReference type="EC" id="2.3.1.1"/>
    </reaction>
</comment>
<comment type="pathway">
    <text evidence="1">Amino-acid biosynthesis; L-arginine biosynthesis; L-ornithine and N-acetyl-L-glutamate from L-glutamate and N(2)-acetyl-L-ornithine (cyclic): step 1/1.</text>
</comment>
<comment type="pathway">
    <text evidence="1">Amino-acid biosynthesis; L-arginine biosynthesis; N(2)-acetyl-L-ornithine from L-glutamate: step 1/4.</text>
</comment>
<comment type="subunit">
    <text evidence="1">Heterodimer of an alpha and a beta chain.</text>
</comment>
<comment type="subcellular location">
    <subcellularLocation>
        <location evidence="1">Mitochondrion matrix</location>
    </subcellularLocation>
</comment>
<comment type="PTM">
    <text evidence="1">The alpha and beta chains are autoproteolytically processed from a single precursor protein within the mitochondrion.</text>
</comment>
<comment type="miscellaneous">
    <text evidence="1">This protein may be expected to contain an N-terminal transit peptide but none has been predicted.</text>
</comment>
<comment type="similarity">
    <text evidence="1">Belongs to the ArgJ family.</text>
</comment>